<protein>
    <recommendedName>
        <fullName evidence="1">UPF0201 protein Pcal_0593</fullName>
    </recommendedName>
</protein>
<sequence length="143" mass="15832">MRVEAVVEVRLTEDKKKVLKALENVFTPVNIREEPSDVGVVLISTCDGHKCLEKLRGAIWRQGIQDAARSVISKGVVGEDTVIFSINKQAAYVGVVSFVTEPGESPLGPITFTVKTSNVRQFIDWLAPRTYRGKVYYEAPPPD</sequence>
<organism>
    <name type="scientific">Pyrobaculum calidifontis (strain DSM 21063 / JCM 11548 / VA1)</name>
    <dbReference type="NCBI Taxonomy" id="410359"/>
    <lineage>
        <taxon>Archaea</taxon>
        <taxon>Thermoproteota</taxon>
        <taxon>Thermoprotei</taxon>
        <taxon>Thermoproteales</taxon>
        <taxon>Thermoproteaceae</taxon>
        <taxon>Pyrobaculum</taxon>
    </lineage>
</organism>
<name>Y593_PYRCJ</name>
<proteinExistence type="inferred from homology"/>
<comment type="similarity">
    <text evidence="1">Belongs to the UPF0201 family.</text>
</comment>
<evidence type="ECO:0000255" key="1">
    <source>
        <dbReference type="HAMAP-Rule" id="MF_01112"/>
    </source>
</evidence>
<feature type="chain" id="PRO_1000065154" description="UPF0201 protein Pcal_0593">
    <location>
        <begin position="1"/>
        <end position="143"/>
    </location>
</feature>
<gene>
    <name type="ordered locus">Pcal_0593</name>
</gene>
<accession>A3MTQ3</accession>
<dbReference type="EMBL" id="CP000561">
    <property type="protein sequence ID" value="ABO08020.1"/>
    <property type="molecule type" value="Genomic_DNA"/>
</dbReference>
<dbReference type="RefSeq" id="WP_011849278.1">
    <property type="nucleotide sequence ID" value="NC_009073.1"/>
</dbReference>
<dbReference type="SMR" id="A3MTQ3"/>
<dbReference type="STRING" id="410359.Pcal_0593"/>
<dbReference type="GeneID" id="4908489"/>
<dbReference type="KEGG" id="pcl:Pcal_0593"/>
<dbReference type="eggNOG" id="arCOG01043">
    <property type="taxonomic scope" value="Archaea"/>
</dbReference>
<dbReference type="HOGENOM" id="CLU_134829_1_0_2"/>
<dbReference type="OrthoDB" id="7819at2157"/>
<dbReference type="Proteomes" id="UP000001431">
    <property type="component" value="Chromosome"/>
</dbReference>
<dbReference type="Gene3D" id="3.30.1440.10">
    <property type="match status" value="1"/>
</dbReference>
<dbReference type="HAMAP" id="MF_01112">
    <property type="entry name" value="UPF0201"/>
    <property type="match status" value="1"/>
</dbReference>
<dbReference type="InterPro" id="IPR002739">
    <property type="entry name" value="PAB1135-like"/>
</dbReference>
<dbReference type="InterPro" id="IPR022803">
    <property type="entry name" value="Ribosomal_uL5_dom_sf"/>
</dbReference>
<dbReference type="PANTHER" id="PTHR39652">
    <property type="entry name" value="UPF0201 PROTEIN TK1335"/>
    <property type="match status" value="1"/>
</dbReference>
<dbReference type="PANTHER" id="PTHR39652:SF1">
    <property type="entry name" value="UPF0201 PROTEIN TK1335"/>
    <property type="match status" value="1"/>
</dbReference>
<dbReference type="Pfam" id="PF01877">
    <property type="entry name" value="RNA_binding"/>
    <property type="match status" value="1"/>
</dbReference>
<dbReference type="SUPFAM" id="SSF55282">
    <property type="entry name" value="RL5-like"/>
    <property type="match status" value="1"/>
</dbReference>
<reference key="1">
    <citation type="submission" date="2007-02" db="EMBL/GenBank/DDBJ databases">
        <title>Complete sequence of Pyrobaculum calidifontis JCM 11548.</title>
        <authorList>
            <consortium name="US DOE Joint Genome Institute"/>
            <person name="Copeland A."/>
            <person name="Lucas S."/>
            <person name="Lapidus A."/>
            <person name="Barry K."/>
            <person name="Glavina del Rio T."/>
            <person name="Dalin E."/>
            <person name="Tice H."/>
            <person name="Pitluck S."/>
            <person name="Chain P."/>
            <person name="Malfatti S."/>
            <person name="Shin M."/>
            <person name="Vergez L."/>
            <person name="Schmutz J."/>
            <person name="Larimer F."/>
            <person name="Land M."/>
            <person name="Hauser L."/>
            <person name="Kyrpides N."/>
            <person name="Mikhailova N."/>
            <person name="Cozen A.E."/>
            <person name="Fitz-Gibbon S.T."/>
            <person name="House C.H."/>
            <person name="Saltikov C."/>
            <person name="Lowe T.M."/>
            <person name="Richardson P."/>
        </authorList>
    </citation>
    <scope>NUCLEOTIDE SEQUENCE [LARGE SCALE GENOMIC DNA]</scope>
    <source>
        <strain>DSM 21063 / JCM 11548 / VA1</strain>
    </source>
</reference>